<reference key="1">
    <citation type="submission" date="2005-08" db="EMBL/GenBank/DDBJ databases">
        <title>Complete sequence of chromosome 1 of Synechococcus elongatus PCC 7942.</title>
        <authorList>
            <consortium name="US DOE Joint Genome Institute"/>
            <person name="Copeland A."/>
            <person name="Lucas S."/>
            <person name="Lapidus A."/>
            <person name="Barry K."/>
            <person name="Detter J.C."/>
            <person name="Glavina T."/>
            <person name="Hammon N."/>
            <person name="Israni S."/>
            <person name="Pitluck S."/>
            <person name="Schmutz J."/>
            <person name="Larimer F."/>
            <person name="Land M."/>
            <person name="Kyrpides N."/>
            <person name="Lykidis A."/>
            <person name="Golden S."/>
            <person name="Richardson P."/>
        </authorList>
    </citation>
    <scope>NUCLEOTIDE SEQUENCE [LARGE SCALE GENOMIC DNA]</scope>
    <source>
        <strain>ATCC 33912 / PCC 7942 / FACHB-805</strain>
    </source>
</reference>
<dbReference type="EMBL" id="CP000100">
    <property type="protein sequence ID" value="ABB58076.1"/>
    <property type="molecule type" value="Genomic_DNA"/>
</dbReference>
<dbReference type="RefSeq" id="WP_011244357.1">
    <property type="nucleotide sequence ID" value="NZ_JACJTX010000001.1"/>
</dbReference>
<dbReference type="SMR" id="Q31LJ3"/>
<dbReference type="STRING" id="1140.Synpcc7942_2046"/>
<dbReference type="PaxDb" id="1140-Synpcc7942_2046"/>
<dbReference type="GeneID" id="72430922"/>
<dbReference type="KEGG" id="syf:Synpcc7942_2046"/>
<dbReference type="eggNOG" id="COG0509">
    <property type="taxonomic scope" value="Bacteria"/>
</dbReference>
<dbReference type="HOGENOM" id="CLU_097408_2_2_3"/>
<dbReference type="OrthoDB" id="9796712at2"/>
<dbReference type="BioCyc" id="SYNEL:SYNPCC7942_2046-MONOMER"/>
<dbReference type="Proteomes" id="UP000889800">
    <property type="component" value="Chromosome"/>
</dbReference>
<dbReference type="GO" id="GO:0005829">
    <property type="term" value="C:cytosol"/>
    <property type="evidence" value="ECO:0007669"/>
    <property type="project" value="TreeGrafter"/>
</dbReference>
<dbReference type="GO" id="GO:0005960">
    <property type="term" value="C:glycine cleavage complex"/>
    <property type="evidence" value="ECO:0007669"/>
    <property type="project" value="InterPro"/>
</dbReference>
<dbReference type="GO" id="GO:0019464">
    <property type="term" value="P:glycine decarboxylation via glycine cleavage system"/>
    <property type="evidence" value="ECO:0007669"/>
    <property type="project" value="UniProtKB-UniRule"/>
</dbReference>
<dbReference type="CDD" id="cd06848">
    <property type="entry name" value="GCS_H"/>
    <property type="match status" value="1"/>
</dbReference>
<dbReference type="Gene3D" id="2.40.50.100">
    <property type="match status" value="1"/>
</dbReference>
<dbReference type="HAMAP" id="MF_00272">
    <property type="entry name" value="GcvH"/>
    <property type="match status" value="1"/>
</dbReference>
<dbReference type="InterPro" id="IPR003016">
    <property type="entry name" value="2-oxoA_DH_lipoyl-BS"/>
</dbReference>
<dbReference type="InterPro" id="IPR000089">
    <property type="entry name" value="Biotin_lipoyl"/>
</dbReference>
<dbReference type="InterPro" id="IPR002930">
    <property type="entry name" value="GCV_H"/>
</dbReference>
<dbReference type="InterPro" id="IPR033753">
    <property type="entry name" value="GCV_H/Fam206"/>
</dbReference>
<dbReference type="InterPro" id="IPR017453">
    <property type="entry name" value="GCV_H_sub"/>
</dbReference>
<dbReference type="InterPro" id="IPR011053">
    <property type="entry name" value="Single_hybrid_motif"/>
</dbReference>
<dbReference type="NCBIfam" id="TIGR00527">
    <property type="entry name" value="gcvH"/>
    <property type="match status" value="1"/>
</dbReference>
<dbReference type="NCBIfam" id="NF002270">
    <property type="entry name" value="PRK01202.1"/>
    <property type="match status" value="1"/>
</dbReference>
<dbReference type="PANTHER" id="PTHR11715">
    <property type="entry name" value="GLYCINE CLEAVAGE SYSTEM H PROTEIN"/>
    <property type="match status" value="1"/>
</dbReference>
<dbReference type="PANTHER" id="PTHR11715:SF3">
    <property type="entry name" value="GLYCINE CLEAVAGE SYSTEM H PROTEIN-RELATED"/>
    <property type="match status" value="1"/>
</dbReference>
<dbReference type="Pfam" id="PF01597">
    <property type="entry name" value="GCV_H"/>
    <property type="match status" value="1"/>
</dbReference>
<dbReference type="SUPFAM" id="SSF51230">
    <property type="entry name" value="Single hybrid motif"/>
    <property type="match status" value="1"/>
</dbReference>
<dbReference type="PROSITE" id="PS50968">
    <property type="entry name" value="BIOTINYL_LIPOYL"/>
    <property type="match status" value="1"/>
</dbReference>
<dbReference type="PROSITE" id="PS00189">
    <property type="entry name" value="LIPOYL"/>
    <property type="match status" value="1"/>
</dbReference>
<keyword id="KW-0450">Lipoyl</keyword>
<keyword id="KW-1185">Reference proteome</keyword>
<comment type="function">
    <text evidence="1">The glycine cleavage system catalyzes the degradation of glycine. The H protein shuttles the methylamine group of glycine from the P protein to the T protein.</text>
</comment>
<comment type="cofactor">
    <cofactor evidence="1">
        <name>(R)-lipoate</name>
        <dbReference type="ChEBI" id="CHEBI:83088"/>
    </cofactor>
    <text evidence="1">Binds 1 lipoyl cofactor covalently.</text>
</comment>
<comment type="subunit">
    <text evidence="1">The glycine cleavage system is composed of four proteins: P, T, L and H.</text>
</comment>
<comment type="similarity">
    <text evidence="1">Belongs to the GcvH family.</text>
</comment>
<sequence length="129" mass="14069">MALIYPDNLRYFDSHEYVRLDGDIAVIGISAYAIDQLGDIVFLELPEVGSTIAIGASFGTVESVKAVEEVYAPVTGEIIERNEAALEAPEILNSDPYEQGWLLKVQLTGKPDLSDSYDAAQYQALVEGQ</sequence>
<accession>Q31LJ3</accession>
<organism>
    <name type="scientific">Synechococcus elongatus (strain ATCC 33912 / PCC 7942 / FACHB-805)</name>
    <name type="common">Anacystis nidulans R2</name>
    <dbReference type="NCBI Taxonomy" id="1140"/>
    <lineage>
        <taxon>Bacteria</taxon>
        <taxon>Bacillati</taxon>
        <taxon>Cyanobacteriota</taxon>
        <taxon>Cyanophyceae</taxon>
        <taxon>Synechococcales</taxon>
        <taxon>Synechococcaceae</taxon>
        <taxon>Synechococcus</taxon>
    </lineage>
</organism>
<proteinExistence type="inferred from homology"/>
<feature type="chain" id="PRO_0000302453" description="Glycine cleavage system H protein">
    <location>
        <begin position="1"/>
        <end position="129"/>
    </location>
</feature>
<feature type="domain" description="Lipoyl-binding" evidence="2">
    <location>
        <begin position="24"/>
        <end position="106"/>
    </location>
</feature>
<feature type="modified residue" description="N6-lipoyllysine" evidence="1">
    <location>
        <position position="65"/>
    </location>
</feature>
<gene>
    <name evidence="1" type="primary">gcvH</name>
    <name type="ordered locus">Synpcc7942_2046</name>
</gene>
<protein>
    <recommendedName>
        <fullName evidence="1">Glycine cleavage system H protein</fullName>
    </recommendedName>
</protein>
<evidence type="ECO:0000255" key="1">
    <source>
        <dbReference type="HAMAP-Rule" id="MF_00272"/>
    </source>
</evidence>
<evidence type="ECO:0000255" key="2">
    <source>
        <dbReference type="PROSITE-ProRule" id="PRU01066"/>
    </source>
</evidence>
<name>GCSH_SYNE7</name>